<feature type="chain" id="PRO_0000347083" description="Large ribosomal subunit protein uL30">
    <location>
        <begin position="1"/>
        <end position="65"/>
    </location>
</feature>
<reference key="1">
    <citation type="journal article" date="2005" name="Infect. Immun.">
        <title>Whole-genome analyses of speciation events in pathogenic Brucellae.</title>
        <authorList>
            <person name="Chain P.S."/>
            <person name="Comerci D.J."/>
            <person name="Tolmasky M.E."/>
            <person name="Larimer F.W."/>
            <person name="Malfatti S.A."/>
            <person name="Vergez L.M."/>
            <person name="Aguero F."/>
            <person name="Land M.L."/>
            <person name="Ugalde R.A."/>
            <person name="Garcia E."/>
        </authorList>
    </citation>
    <scope>NUCLEOTIDE SEQUENCE [LARGE SCALE GENOMIC DNA]</scope>
    <source>
        <strain>2308</strain>
    </source>
</reference>
<dbReference type="EMBL" id="AM040264">
    <property type="protein sequence ID" value="CAJ11193.1"/>
    <property type="molecule type" value="Genomic_DNA"/>
</dbReference>
<dbReference type="RefSeq" id="WP_002967737.1">
    <property type="nucleotide sequence ID" value="NZ_KN046823.1"/>
</dbReference>
<dbReference type="SMR" id="Q2YRT4"/>
<dbReference type="STRING" id="359391.BAB1_1237"/>
<dbReference type="GeneID" id="97533542"/>
<dbReference type="KEGG" id="bmf:BAB1_1237"/>
<dbReference type="PATRIC" id="fig|359391.11.peg.137"/>
<dbReference type="HOGENOM" id="CLU_131047_1_2_5"/>
<dbReference type="Proteomes" id="UP000002719">
    <property type="component" value="Chromosome I"/>
</dbReference>
<dbReference type="GO" id="GO:0022625">
    <property type="term" value="C:cytosolic large ribosomal subunit"/>
    <property type="evidence" value="ECO:0007669"/>
    <property type="project" value="TreeGrafter"/>
</dbReference>
<dbReference type="GO" id="GO:0003735">
    <property type="term" value="F:structural constituent of ribosome"/>
    <property type="evidence" value="ECO:0007669"/>
    <property type="project" value="InterPro"/>
</dbReference>
<dbReference type="GO" id="GO:0006412">
    <property type="term" value="P:translation"/>
    <property type="evidence" value="ECO:0007669"/>
    <property type="project" value="UniProtKB-UniRule"/>
</dbReference>
<dbReference type="CDD" id="cd01658">
    <property type="entry name" value="Ribosomal_L30"/>
    <property type="match status" value="1"/>
</dbReference>
<dbReference type="Gene3D" id="3.30.1390.20">
    <property type="entry name" value="Ribosomal protein L30, ferredoxin-like fold domain"/>
    <property type="match status" value="1"/>
</dbReference>
<dbReference type="HAMAP" id="MF_01371_B">
    <property type="entry name" value="Ribosomal_uL30_B"/>
    <property type="match status" value="1"/>
</dbReference>
<dbReference type="InterPro" id="IPR036919">
    <property type="entry name" value="Ribo_uL30_ferredoxin-like_sf"/>
</dbReference>
<dbReference type="InterPro" id="IPR005996">
    <property type="entry name" value="Ribosomal_uL30_bac-type"/>
</dbReference>
<dbReference type="InterPro" id="IPR016082">
    <property type="entry name" value="Ribosomal_uL30_ferredoxin-like"/>
</dbReference>
<dbReference type="NCBIfam" id="TIGR01308">
    <property type="entry name" value="rpmD_bact"/>
    <property type="match status" value="1"/>
</dbReference>
<dbReference type="PANTHER" id="PTHR15892:SF2">
    <property type="entry name" value="LARGE RIBOSOMAL SUBUNIT PROTEIN UL30M"/>
    <property type="match status" value="1"/>
</dbReference>
<dbReference type="PANTHER" id="PTHR15892">
    <property type="entry name" value="MITOCHONDRIAL RIBOSOMAL PROTEIN L30"/>
    <property type="match status" value="1"/>
</dbReference>
<dbReference type="Pfam" id="PF00327">
    <property type="entry name" value="Ribosomal_L30"/>
    <property type="match status" value="1"/>
</dbReference>
<dbReference type="PIRSF" id="PIRSF002211">
    <property type="entry name" value="Ribosomal_L30_bac-type"/>
    <property type="match status" value="1"/>
</dbReference>
<dbReference type="SUPFAM" id="SSF55129">
    <property type="entry name" value="Ribosomal protein L30p/L7e"/>
    <property type="match status" value="1"/>
</dbReference>
<protein>
    <recommendedName>
        <fullName evidence="1">Large ribosomal subunit protein uL30</fullName>
    </recommendedName>
    <alternativeName>
        <fullName evidence="2">50S ribosomal protein L30</fullName>
    </alternativeName>
</protein>
<comment type="subunit">
    <text evidence="1">Part of the 50S ribosomal subunit.</text>
</comment>
<comment type="similarity">
    <text evidence="1">Belongs to the universal ribosomal protein uL30 family.</text>
</comment>
<organism>
    <name type="scientific">Brucella abortus (strain 2308)</name>
    <dbReference type="NCBI Taxonomy" id="359391"/>
    <lineage>
        <taxon>Bacteria</taxon>
        <taxon>Pseudomonadati</taxon>
        <taxon>Pseudomonadota</taxon>
        <taxon>Alphaproteobacteria</taxon>
        <taxon>Hyphomicrobiales</taxon>
        <taxon>Brucellaceae</taxon>
        <taxon>Brucella/Ochrobactrum group</taxon>
        <taxon>Brucella</taxon>
    </lineage>
</organism>
<evidence type="ECO:0000255" key="1">
    <source>
        <dbReference type="HAMAP-Rule" id="MF_01371"/>
    </source>
</evidence>
<evidence type="ECO:0000305" key="2"/>
<gene>
    <name evidence="1" type="primary">rpmD</name>
    <name type="ordered locus">BAB1_1237</name>
</gene>
<accession>Q2YRT4</accession>
<keyword id="KW-1185">Reference proteome</keyword>
<keyword id="KW-0687">Ribonucleoprotein</keyword>
<keyword id="KW-0689">Ribosomal protein</keyword>
<name>RL30_BRUA2</name>
<proteinExistence type="inferred from homology"/>
<sequence>MAEKKGKTVTVEQIGSPIRRPAEQRATLIGLGLNKMHRRSTLEDTPAVRGMIAKLPHLVRVVDEA</sequence>